<sequence length="256" mass="27974">MVLISVLASLLVLQLSYAQKSSELVIGGAECNINEHRSLVLLYNSSRLFGGGTLINKEWVLSAAHCDGENMKIYLGLHHFRLPNKDRQIRVAKEKYFCRDRKSIVDKDIMLIKLNKPVNNSTHIAPLSLPSSPPSVGSDCRIMGWGTITSPNDTYPKVPHCANINILEHSLCERAYNDLSASSRTLCAGIEKGGIDTCKGDSGGPLICNGQIQGIVSWGDEVCGKPNKPGVYTKVFDYTDWIRNIIAGNTAATCPQ</sequence>
<name>VSPP_CERCE</name>
<proteinExistence type="evidence at protein level"/>
<reference key="1">
    <citation type="journal article" date="2003" name="Biochemistry">
        <title>Molecular cloning and expression of a functional snake venom serine proteinase, with platelet aggregating activity, from the Cerastes cerastes viper.</title>
        <authorList>
            <person name="Dekhil H."/>
            <person name="Wisner A."/>
            <person name="Marrakchi N."/>
            <person name="El Ayeb M."/>
            <person name="Bon C."/>
            <person name="Karoui H."/>
        </authorList>
    </citation>
    <scope>NUCLEOTIDE SEQUENCE [MRNA]</scope>
    <scope>FUNCTION</scope>
    <scope>BIOPHYSICOCHEMICAL PROPERTIES</scope>
    <source>
        <tissue>Venom gland</tissue>
    </source>
</reference>
<reference key="2">
    <citation type="journal article" date="1995" name="Biochim. Biophys. Acta">
        <title>Cerastocytin, a new thrombin-like platelet activator from the venom of the Tunisian viper Cerastes cerastes.</title>
        <authorList>
            <person name="Marrakchi N."/>
            <person name="Zingali R.B."/>
            <person name="Karoui H."/>
            <person name="Bon C."/>
            <person name="el Ayeb M."/>
        </authorList>
    </citation>
    <scope>PROTEIN SEQUENCE OF 25-74</scope>
    <scope>FUNCTION</scope>
    <scope>ACTIVITY REGULATION</scope>
    <scope>SUBUNIT</scope>
    <source>
        <tissue>Venom</tissue>
    </source>
</reference>
<reference key="3">
    <citation type="journal article" date="1997" name="Toxicon">
        <title>Procoagulant and platelet-aggregating properties of cerastocytin from Cerastes cerastes venom.</title>
        <authorList>
            <person name="Marrakchi N."/>
            <person name="Barbouche R."/>
            <person name="Guermazi S."/>
            <person name="Bon C."/>
            <person name="el Ayeb M."/>
        </authorList>
    </citation>
    <scope>FUNCTION</scope>
</reference>
<keyword id="KW-1204">Blood coagulation cascade activating toxin</keyword>
<keyword id="KW-0903">Direct protein sequencing</keyword>
<keyword id="KW-1015">Disulfide bond</keyword>
<keyword id="KW-0325">Glycoprotein</keyword>
<keyword id="KW-1199">Hemostasis impairing toxin</keyword>
<keyword id="KW-0378">Hydrolase</keyword>
<keyword id="KW-1202">Platelet aggregation activating toxin</keyword>
<keyword id="KW-0645">Protease</keyword>
<keyword id="KW-0964">Secreted</keyword>
<keyword id="KW-0720">Serine protease</keyword>
<keyword id="KW-0732">Signal</keyword>
<keyword id="KW-0800">Toxin</keyword>
<keyword id="KW-0865">Zymogen</keyword>
<evidence type="ECO:0000250" key="1"/>
<evidence type="ECO:0000255" key="2"/>
<evidence type="ECO:0000255" key="3">
    <source>
        <dbReference type="PROSITE-ProRule" id="PRU00274"/>
    </source>
</evidence>
<evidence type="ECO:0000269" key="4">
    <source>
    </source>
</evidence>
<evidence type="ECO:0000269" key="5">
    <source>
    </source>
</evidence>
<evidence type="ECO:0000269" key="6">
    <source>
    </source>
</evidence>
<evidence type="ECO:0000305" key="7"/>
<accession>Q7SYF1</accession>
<accession>Q9PRT4</accession>
<feature type="signal peptide" evidence="2">
    <location>
        <begin position="1"/>
        <end position="18"/>
    </location>
</feature>
<feature type="propeptide" id="PRO_0000294994" evidence="5">
    <location>
        <begin position="19"/>
        <end position="24"/>
    </location>
</feature>
<feature type="chain" id="PRO_0000294995" description="Thrombin-like enzyme cerastocytin">
    <location>
        <begin position="25"/>
        <end position="256"/>
    </location>
</feature>
<feature type="domain" description="Peptidase S1" evidence="3">
    <location>
        <begin position="25"/>
        <end position="247"/>
    </location>
</feature>
<feature type="active site" description="Charge relay system" evidence="1">
    <location>
        <position position="65"/>
    </location>
</feature>
<feature type="active site" description="Charge relay system" evidence="1">
    <location>
        <position position="108"/>
    </location>
</feature>
<feature type="active site" description="Charge relay system" evidence="1">
    <location>
        <position position="202"/>
    </location>
</feature>
<feature type="glycosylation site" description="N-linked (GlcNAc...) asparagine" evidence="2">
    <location>
        <position position="44"/>
    </location>
</feature>
<feature type="glycosylation site" description="N-linked (GlcNAc...) asparagine" evidence="2">
    <location>
        <position position="119"/>
    </location>
</feature>
<feature type="glycosylation site" description="N-linked (GlcNAc...) asparagine" evidence="2">
    <location>
        <position position="120"/>
    </location>
</feature>
<feature type="glycosylation site" description="N-linked (GlcNAc...) asparagine" evidence="2">
    <location>
        <position position="152"/>
    </location>
</feature>
<feature type="disulfide bond" evidence="3">
    <location>
        <begin position="31"/>
        <end position="161"/>
    </location>
</feature>
<feature type="disulfide bond" evidence="3">
    <location>
        <begin position="98"/>
        <end position="254"/>
    </location>
</feature>
<feature type="disulfide bond" evidence="3">
    <location>
        <begin position="140"/>
        <end position="208"/>
    </location>
</feature>
<feature type="disulfide bond" evidence="3">
    <location>
        <begin position="172"/>
        <end position="187"/>
    </location>
</feature>
<feature type="disulfide bond" evidence="3">
    <location>
        <begin position="198"/>
        <end position="223"/>
    </location>
</feature>
<feature type="sequence conflict" description="In Ref. 2; AA sequence." evidence="7" ref="2">
    <original>N</original>
    <variation>T</variation>
    <location>
        <position position="44"/>
    </location>
</feature>
<comment type="function">
    <text evidence="4 5 6">Thrombin-like snake venom serine protease which potently induces platelet aggregation and has fibrinogenolytic activities. Clots purified fibrinogen and hydrolyzes alpha-chains (FGA). High concentrations of this enzyme also cleave prothrombin (F2) and factor X (F10). Is also able to activate factor XIII (F8).</text>
</comment>
<comment type="activity regulation">
    <text evidence="5">Its platelets aggregating activity is inhibited by chlorpromazine, theophylline mepacrine. Its platelet aggregating activity and its amidolytic activity are inhibited by PMSF, TPCK, TLCK and soybean trypsin inhibitors. Is unaffected by hirudin or by antithrombin-III in the presence of heparin.</text>
</comment>
<comment type="biophysicochemical properties">
    <kinetics>
        <KM evidence="4">309 uM for S-2238</KM>
        <KM evidence="4">850 uM for S-2251</KM>
    </kinetics>
</comment>
<comment type="subunit">
    <text evidence="5">Monomer.</text>
</comment>
<comment type="subcellular location">
    <subcellularLocation>
        <location>Secreted</location>
    </subcellularLocation>
</comment>
<comment type="tissue specificity">
    <text>Expressed by the venom gland.</text>
</comment>
<comment type="similarity">
    <text evidence="3">Belongs to the peptidase S1 family. Snake venom subfamily.</text>
</comment>
<comment type="caution">
    <text evidence="7">Lacks the conserved Cys-50-Cys-66 disulfide bridge due to the replacement of Cys-50 by a Gly.</text>
</comment>
<dbReference type="EC" id="3.4.21.-"/>
<dbReference type="EMBL" id="AJ553977">
    <property type="protein sequence ID" value="CAD86932.1"/>
    <property type="molecule type" value="mRNA"/>
</dbReference>
<dbReference type="PIR" id="S55674">
    <property type="entry name" value="S55674"/>
</dbReference>
<dbReference type="SMR" id="Q7SYF1"/>
<dbReference type="MEROPS" id="S01.497"/>
<dbReference type="SABIO-RK" id="Q7SYF1"/>
<dbReference type="GO" id="GO:0005576">
    <property type="term" value="C:extracellular region"/>
    <property type="evidence" value="ECO:0007669"/>
    <property type="project" value="UniProtKB-SubCell"/>
</dbReference>
<dbReference type="GO" id="GO:0030141">
    <property type="term" value="C:secretory granule"/>
    <property type="evidence" value="ECO:0007669"/>
    <property type="project" value="TreeGrafter"/>
</dbReference>
<dbReference type="GO" id="GO:0004252">
    <property type="term" value="F:serine-type endopeptidase activity"/>
    <property type="evidence" value="ECO:0007669"/>
    <property type="project" value="InterPro"/>
</dbReference>
<dbReference type="GO" id="GO:0090729">
    <property type="term" value="F:toxin activity"/>
    <property type="evidence" value="ECO:0007669"/>
    <property type="project" value="UniProtKB-KW"/>
</dbReference>
<dbReference type="GO" id="GO:0006508">
    <property type="term" value="P:proteolysis"/>
    <property type="evidence" value="ECO:0007669"/>
    <property type="project" value="UniProtKB-KW"/>
</dbReference>
<dbReference type="CDD" id="cd00190">
    <property type="entry name" value="Tryp_SPc"/>
    <property type="match status" value="1"/>
</dbReference>
<dbReference type="FunFam" id="2.40.10.10:FF:000158">
    <property type="entry name" value="Thrombin-like enzyme saxthrombin"/>
    <property type="match status" value="1"/>
</dbReference>
<dbReference type="Gene3D" id="2.40.10.10">
    <property type="entry name" value="Trypsin-like serine proteases"/>
    <property type="match status" value="2"/>
</dbReference>
<dbReference type="InterPro" id="IPR009003">
    <property type="entry name" value="Peptidase_S1_PA"/>
</dbReference>
<dbReference type="InterPro" id="IPR043504">
    <property type="entry name" value="Peptidase_S1_PA_chymotrypsin"/>
</dbReference>
<dbReference type="InterPro" id="IPR001314">
    <property type="entry name" value="Peptidase_S1A"/>
</dbReference>
<dbReference type="InterPro" id="IPR001254">
    <property type="entry name" value="Trypsin_dom"/>
</dbReference>
<dbReference type="InterPro" id="IPR018114">
    <property type="entry name" value="TRYPSIN_HIS"/>
</dbReference>
<dbReference type="InterPro" id="IPR033116">
    <property type="entry name" value="TRYPSIN_SER"/>
</dbReference>
<dbReference type="PANTHER" id="PTHR24271:SF47">
    <property type="entry name" value="KALLIKREIN-1"/>
    <property type="match status" value="1"/>
</dbReference>
<dbReference type="PANTHER" id="PTHR24271">
    <property type="entry name" value="KALLIKREIN-RELATED"/>
    <property type="match status" value="1"/>
</dbReference>
<dbReference type="Pfam" id="PF00089">
    <property type="entry name" value="Trypsin"/>
    <property type="match status" value="1"/>
</dbReference>
<dbReference type="PRINTS" id="PR00722">
    <property type="entry name" value="CHYMOTRYPSIN"/>
</dbReference>
<dbReference type="SMART" id="SM00020">
    <property type="entry name" value="Tryp_SPc"/>
    <property type="match status" value="1"/>
</dbReference>
<dbReference type="SUPFAM" id="SSF50494">
    <property type="entry name" value="Trypsin-like serine proteases"/>
    <property type="match status" value="1"/>
</dbReference>
<dbReference type="PROSITE" id="PS50240">
    <property type="entry name" value="TRYPSIN_DOM"/>
    <property type="match status" value="1"/>
</dbReference>
<dbReference type="PROSITE" id="PS00134">
    <property type="entry name" value="TRYPSIN_HIS"/>
    <property type="match status" value="1"/>
</dbReference>
<dbReference type="PROSITE" id="PS00135">
    <property type="entry name" value="TRYPSIN_SER"/>
    <property type="match status" value="1"/>
</dbReference>
<protein>
    <recommendedName>
        <fullName>Thrombin-like enzyme cerastocytin</fullName>
        <shortName>SVTLE</shortName>
        <ecNumber>3.4.21.-</ecNumber>
    </recommendedName>
    <alternativeName>
        <fullName>C.cerastes platelet proaggregant protein</fullName>
        <shortName>CC-PPP</shortName>
    </alternativeName>
    <alternativeName>
        <fullName>Factor VIII activator</fullName>
    </alternativeName>
    <alternativeName>
        <fullName>Fibrinogen-clotting enzyme</fullName>
    </alternativeName>
    <alternativeName>
        <fullName>Proaggregant serine proteinase</fullName>
    </alternativeName>
    <alternativeName>
        <fullName>Snake venom serine protease</fullName>
        <shortName>SVSP</shortName>
    </alternativeName>
</protein>
<organism>
    <name type="scientific">Cerastes cerastes</name>
    <name type="common">Horned desert viper</name>
    <dbReference type="NCBI Taxonomy" id="8697"/>
    <lineage>
        <taxon>Eukaryota</taxon>
        <taxon>Metazoa</taxon>
        <taxon>Chordata</taxon>
        <taxon>Craniata</taxon>
        <taxon>Vertebrata</taxon>
        <taxon>Euteleostomi</taxon>
        <taxon>Lepidosauria</taxon>
        <taxon>Squamata</taxon>
        <taxon>Bifurcata</taxon>
        <taxon>Unidentata</taxon>
        <taxon>Episquamata</taxon>
        <taxon>Toxicofera</taxon>
        <taxon>Serpentes</taxon>
        <taxon>Colubroidea</taxon>
        <taxon>Viperidae</taxon>
        <taxon>Viperinae</taxon>
        <taxon>Cerastes</taxon>
    </lineage>
</organism>